<feature type="chain" id="PRO_1000099119" description="GTPase Der">
    <location>
        <begin position="1"/>
        <end position="490"/>
    </location>
</feature>
<feature type="domain" description="EngA-type G 1">
    <location>
        <begin position="3"/>
        <end position="166"/>
    </location>
</feature>
<feature type="domain" description="EngA-type G 2">
    <location>
        <begin position="203"/>
        <end position="376"/>
    </location>
</feature>
<feature type="domain" description="KH-like" evidence="1">
    <location>
        <begin position="377"/>
        <end position="461"/>
    </location>
</feature>
<feature type="binding site" evidence="1">
    <location>
        <begin position="9"/>
        <end position="16"/>
    </location>
    <ligand>
        <name>GTP</name>
        <dbReference type="ChEBI" id="CHEBI:37565"/>
        <label>1</label>
    </ligand>
</feature>
<feature type="binding site" evidence="1">
    <location>
        <begin position="56"/>
        <end position="60"/>
    </location>
    <ligand>
        <name>GTP</name>
        <dbReference type="ChEBI" id="CHEBI:37565"/>
        <label>1</label>
    </ligand>
</feature>
<feature type="binding site" evidence="1">
    <location>
        <begin position="118"/>
        <end position="121"/>
    </location>
    <ligand>
        <name>GTP</name>
        <dbReference type="ChEBI" id="CHEBI:37565"/>
        <label>1</label>
    </ligand>
</feature>
<feature type="binding site" evidence="1">
    <location>
        <begin position="209"/>
        <end position="216"/>
    </location>
    <ligand>
        <name>GTP</name>
        <dbReference type="ChEBI" id="CHEBI:37565"/>
        <label>2</label>
    </ligand>
</feature>
<feature type="binding site" evidence="1">
    <location>
        <begin position="256"/>
        <end position="260"/>
    </location>
    <ligand>
        <name>GTP</name>
        <dbReference type="ChEBI" id="CHEBI:37565"/>
        <label>2</label>
    </ligand>
</feature>
<feature type="binding site" evidence="1">
    <location>
        <begin position="321"/>
        <end position="324"/>
    </location>
    <ligand>
        <name>GTP</name>
        <dbReference type="ChEBI" id="CHEBI:37565"/>
        <label>2</label>
    </ligand>
</feature>
<reference key="1">
    <citation type="journal article" date="2008" name="DNA Res.">
        <title>Complete genome sequence and comparative analysis of the wild-type commensal Escherichia coli strain SE11 isolated from a healthy adult.</title>
        <authorList>
            <person name="Oshima K."/>
            <person name="Toh H."/>
            <person name="Ogura Y."/>
            <person name="Sasamoto H."/>
            <person name="Morita H."/>
            <person name="Park S.-H."/>
            <person name="Ooka T."/>
            <person name="Iyoda S."/>
            <person name="Taylor T.D."/>
            <person name="Hayashi T."/>
            <person name="Itoh K."/>
            <person name="Hattori M."/>
        </authorList>
    </citation>
    <scope>NUCLEOTIDE SEQUENCE [LARGE SCALE GENOMIC DNA]</scope>
    <source>
        <strain>SE11</strain>
    </source>
</reference>
<sequence length="490" mass="55036">MVPVVALVGRPNVGKSTLFNRLTRTRDALVADFPGLTRDRKYGRAEIEGREFICIDTGGIDGTEDGVETRMAEQSLLAIEEADVVLFMVDARAGLMPADEAIAKHLRSREKPTFLVANKTDGLDPDQAVVDFYSLGLGEIYPIAASHGRGVLSLLEHVLLPWMEDLAPQEEVDEDAEYWAQFEAEENGEEEEEDDFDPQSLPIKLAIVGRPNVGKSTLTNRILGEERVVVYDMPGTTRDSIYIPMERDGREYVLIDTAGVRKRGKITDAVEKFSVIKTLQAIEDANVVMLVIDAREGISDQDLSLLGFILNSGRSLVIVVNKWDGLSQEVKEQVKETLDFRLGFIDFARVHFISALHGSGVGNLFESVREAYDSSTRRVGTSMLTRIMTMAVEDHQPPLVRGRRVKLKYAHAGGYNPPIVVIHGNQVKDLPDSYKRYLMNYFRKSLDVMGSPIRIQFKEGENPYANKRNTLTPTQMRKRKRLMKHIKKNK</sequence>
<comment type="function">
    <text evidence="1">GTPase that plays an essential role in the late steps of ribosome biogenesis.</text>
</comment>
<comment type="subunit">
    <text evidence="1">Associates with the 50S ribosomal subunit.</text>
</comment>
<comment type="similarity">
    <text evidence="1">Belongs to the TRAFAC class TrmE-Era-EngA-EngB-Septin-like GTPase superfamily. EngA (Der) GTPase family.</text>
</comment>
<keyword id="KW-0342">GTP-binding</keyword>
<keyword id="KW-0547">Nucleotide-binding</keyword>
<keyword id="KW-0677">Repeat</keyword>
<keyword id="KW-0690">Ribosome biogenesis</keyword>
<dbReference type="EMBL" id="AP009240">
    <property type="protein sequence ID" value="BAG78321.1"/>
    <property type="molecule type" value="Genomic_DNA"/>
</dbReference>
<dbReference type="RefSeq" id="WP_000249410.1">
    <property type="nucleotide sequence ID" value="NC_011415.1"/>
</dbReference>
<dbReference type="SMR" id="B6I583"/>
<dbReference type="GeneID" id="75206204"/>
<dbReference type="KEGG" id="ecy:ECSE_2797"/>
<dbReference type="HOGENOM" id="CLU_016077_6_2_6"/>
<dbReference type="Proteomes" id="UP000008199">
    <property type="component" value="Chromosome"/>
</dbReference>
<dbReference type="GO" id="GO:0005525">
    <property type="term" value="F:GTP binding"/>
    <property type="evidence" value="ECO:0007669"/>
    <property type="project" value="UniProtKB-UniRule"/>
</dbReference>
<dbReference type="GO" id="GO:0043022">
    <property type="term" value="F:ribosome binding"/>
    <property type="evidence" value="ECO:0007669"/>
    <property type="project" value="TreeGrafter"/>
</dbReference>
<dbReference type="GO" id="GO:0042254">
    <property type="term" value="P:ribosome biogenesis"/>
    <property type="evidence" value="ECO:0007669"/>
    <property type="project" value="UniProtKB-KW"/>
</dbReference>
<dbReference type="CDD" id="cd01894">
    <property type="entry name" value="EngA1"/>
    <property type="match status" value="1"/>
</dbReference>
<dbReference type="CDD" id="cd01895">
    <property type="entry name" value="EngA2"/>
    <property type="match status" value="1"/>
</dbReference>
<dbReference type="FunFam" id="3.30.300.20:FF:000004">
    <property type="entry name" value="GTPase Der"/>
    <property type="match status" value="1"/>
</dbReference>
<dbReference type="FunFam" id="3.40.50.300:FF:000040">
    <property type="entry name" value="GTPase Der"/>
    <property type="match status" value="1"/>
</dbReference>
<dbReference type="FunFam" id="3.40.50.300:FF:000057">
    <property type="entry name" value="GTPase Der"/>
    <property type="match status" value="1"/>
</dbReference>
<dbReference type="Gene3D" id="3.30.300.20">
    <property type="match status" value="1"/>
</dbReference>
<dbReference type="Gene3D" id="3.40.50.300">
    <property type="entry name" value="P-loop containing nucleotide triphosphate hydrolases"/>
    <property type="match status" value="2"/>
</dbReference>
<dbReference type="HAMAP" id="MF_00195">
    <property type="entry name" value="GTPase_Der"/>
    <property type="match status" value="1"/>
</dbReference>
<dbReference type="InterPro" id="IPR031166">
    <property type="entry name" value="G_ENGA"/>
</dbReference>
<dbReference type="InterPro" id="IPR006073">
    <property type="entry name" value="GTP-bd"/>
</dbReference>
<dbReference type="InterPro" id="IPR016484">
    <property type="entry name" value="GTPase_Der"/>
</dbReference>
<dbReference type="InterPro" id="IPR032859">
    <property type="entry name" value="KH_dom-like"/>
</dbReference>
<dbReference type="InterPro" id="IPR015946">
    <property type="entry name" value="KH_dom-like_a/b"/>
</dbReference>
<dbReference type="InterPro" id="IPR027417">
    <property type="entry name" value="P-loop_NTPase"/>
</dbReference>
<dbReference type="InterPro" id="IPR005225">
    <property type="entry name" value="Small_GTP-bd"/>
</dbReference>
<dbReference type="NCBIfam" id="TIGR03594">
    <property type="entry name" value="GTPase_EngA"/>
    <property type="match status" value="1"/>
</dbReference>
<dbReference type="NCBIfam" id="TIGR00231">
    <property type="entry name" value="small_GTP"/>
    <property type="match status" value="2"/>
</dbReference>
<dbReference type="PANTHER" id="PTHR43834">
    <property type="entry name" value="GTPASE DER"/>
    <property type="match status" value="1"/>
</dbReference>
<dbReference type="PANTHER" id="PTHR43834:SF6">
    <property type="entry name" value="GTPASE DER"/>
    <property type="match status" value="1"/>
</dbReference>
<dbReference type="Pfam" id="PF14714">
    <property type="entry name" value="KH_dom-like"/>
    <property type="match status" value="1"/>
</dbReference>
<dbReference type="Pfam" id="PF01926">
    <property type="entry name" value="MMR_HSR1"/>
    <property type="match status" value="2"/>
</dbReference>
<dbReference type="PIRSF" id="PIRSF006485">
    <property type="entry name" value="GTP-binding_EngA"/>
    <property type="match status" value="1"/>
</dbReference>
<dbReference type="PRINTS" id="PR00326">
    <property type="entry name" value="GTP1OBG"/>
</dbReference>
<dbReference type="SUPFAM" id="SSF52540">
    <property type="entry name" value="P-loop containing nucleoside triphosphate hydrolases"/>
    <property type="match status" value="2"/>
</dbReference>
<dbReference type="PROSITE" id="PS51712">
    <property type="entry name" value="G_ENGA"/>
    <property type="match status" value="2"/>
</dbReference>
<accession>B6I583</accession>
<gene>
    <name evidence="1" type="primary">der</name>
    <name type="synonym">engA</name>
    <name type="ordered locus">ECSE_2797</name>
</gene>
<evidence type="ECO:0000255" key="1">
    <source>
        <dbReference type="HAMAP-Rule" id="MF_00195"/>
    </source>
</evidence>
<proteinExistence type="inferred from homology"/>
<protein>
    <recommendedName>
        <fullName evidence="1">GTPase Der</fullName>
    </recommendedName>
    <alternativeName>
        <fullName evidence="1">GTP-binding protein EngA</fullName>
    </alternativeName>
</protein>
<organism>
    <name type="scientific">Escherichia coli (strain SE11)</name>
    <dbReference type="NCBI Taxonomy" id="409438"/>
    <lineage>
        <taxon>Bacteria</taxon>
        <taxon>Pseudomonadati</taxon>
        <taxon>Pseudomonadota</taxon>
        <taxon>Gammaproteobacteria</taxon>
        <taxon>Enterobacterales</taxon>
        <taxon>Enterobacteriaceae</taxon>
        <taxon>Escherichia</taxon>
    </lineage>
</organism>
<name>DER_ECOSE</name>